<reference key="1">
    <citation type="journal article" date="2008" name="PLoS Genet.">
        <title>Genomic islands in the pathogenic filamentous fungus Aspergillus fumigatus.</title>
        <authorList>
            <person name="Fedorova N.D."/>
            <person name="Khaldi N."/>
            <person name="Joardar V.S."/>
            <person name="Maiti R."/>
            <person name="Amedeo P."/>
            <person name="Anderson M.J."/>
            <person name="Crabtree J."/>
            <person name="Silva J.C."/>
            <person name="Badger J.H."/>
            <person name="Albarraq A."/>
            <person name="Angiuoli S."/>
            <person name="Bussey H."/>
            <person name="Bowyer P."/>
            <person name="Cotty P.J."/>
            <person name="Dyer P.S."/>
            <person name="Egan A."/>
            <person name="Galens K."/>
            <person name="Fraser-Liggett C.M."/>
            <person name="Haas B.J."/>
            <person name="Inman J.M."/>
            <person name="Kent R."/>
            <person name="Lemieux S."/>
            <person name="Malavazi I."/>
            <person name="Orvis J."/>
            <person name="Roemer T."/>
            <person name="Ronning C.M."/>
            <person name="Sundaram J.P."/>
            <person name="Sutton G."/>
            <person name="Turner G."/>
            <person name="Venter J.C."/>
            <person name="White O.R."/>
            <person name="Whitty B.R."/>
            <person name="Youngman P."/>
            <person name="Wolfe K.H."/>
            <person name="Goldman G.H."/>
            <person name="Wortman J.R."/>
            <person name="Jiang B."/>
            <person name="Denning D.W."/>
            <person name="Nierman W.C."/>
        </authorList>
    </citation>
    <scope>NUCLEOTIDE SEQUENCE [LARGE SCALE GENOMIC DNA]</scope>
    <source>
        <strain>ATCC 1020 / DSM 3700 / CBS 544.65 / FGSC A1164 / JCM 1740 / NRRL 181 / WB 181</strain>
    </source>
</reference>
<gene>
    <name type="ORF">NFIA_067850</name>
</gene>
<dbReference type="EMBL" id="DS027690">
    <property type="protein sequence ID" value="EAW21618.1"/>
    <property type="molecule type" value="Genomic_DNA"/>
</dbReference>
<dbReference type="RefSeq" id="XP_001263515.1">
    <property type="nucleotide sequence ID" value="XM_001263514.1"/>
</dbReference>
<dbReference type="SMR" id="A1D7C4"/>
<dbReference type="STRING" id="331117.A1D7C4"/>
<dbReference type="EnsemblFungi" id="EAW21618">
    <property type="protein sequence ID" value="EAW21618"/>
    <property type="gene ID" value="NFIA_067850"/>
</dbReference>
<dbReference type="GeneID" id="4590161"/>
<dbReference type="KEGG" id="nfi:NFIA_067850"/>
<dbReference type="VEuPathDB" id="FungiDB:NFIA_067850"/>
<dbReference type="eggNOG" id="KOG3252">
    <property type="taxonomic scope" value="Eukaryota"/>
</dbReference>
<dbReference type="HOGENOM" id="CLU_076723_0_1_1"/>
<dbReference type="OMA" id="GDDLCAD"/>
<dbReference type="OrthoDB" id="337745at2759"/>
<dbReference type="Proteomes" id="UP000006702">
    <property type="component" value="Unassembled WGS sequence"/>
</dbReference>
<dbReference type="GO" id="GO:0016282">
    <property type="term" value="C:eukaryotic 43S preinitiation complex"/>
    <property type="evidence" value="ECO:0007669"/>
    <property type="project" value="UniProtKB-UniRule"/>
</dbReference>
<dbReference type="GO" id="GO:0033290">
    <property type="term" value="C:eukaryotic 48S preinitiation complex"/>
    <property type="evidence" value="ECO:0007669"/>
    <property type="project" value="UniProtKB-UniRule"/>
</dbReference>
<dbReference type="GO" id="GO:0005852">
    <property type="term" value="C:eukaryotic translation initiation factor 3 complex"/>
    <property type="evidence" value="ECO:0007669"/>
    <property type="project" value="UniProtKB-UniRule"/>
</dbReference>
<dbReference type="GO" id="GO:0043022">
    <property type="term" value="F:ribosome binding"/>
    <property type="evidence" value="ECO:0007669"/>
    <property type="project" value="InterPro"/>
</dbReference>
<dbReference type="GO" id="GO:0003723">
    <property type="term" value="F:RNA binding"/>
    <property type="evidence" value="ECO:0007669"/>
    <property type="project" value="UniProtKB-UniRule"/>
</dbReference>
<dbReference type="GO" id="GO:0003743">
    <property type="term" value="F:translation initiation factor activity"/>
    <property type="evidence" value="ECO:0007669"/>
    <property type="project" value="UniProtKB-UniRule"/>
</dbReference>
<dbReference type="GO" id="GO:0001732">
    <property type="term" value="P:formation of cytoplasmic translation initiation complex"/>
    <property type="evidence" value="ECO:0007669"/>
    <property type="project" value="UniProtKB-UniRule"/>
</dbReference>
<dbReference type="GO" id="GO:0006446">
    <property type="term" value="P:regulation of translational initiation"/>
    <property type="evidence" value="ECO:0007669"/>
    <property type="project" value="InterPro"/>
</dbReference>
<dbReference type="FunFam" id="1.10.10.10:FF:000389">
    <property type="entry name" value="Eukaryotic translation initiation factor 3 subunit K"/>
    <property type="match status" value="1"/>
</dbReference>
<dbReference type="FunFam" id="1.25.40.250:FF:000003">
    <property type="entry name" value="Eukaryotic translation initiation factor 3 subunit K"/>
    <property type="match status" value="1"/>
</dbReference>
<dbReference type="Gene3D" id="1.25.40.250">
    <property type="entry name" value="ARM repeat, domain 1"/>
    <property type="match status" value="1"/>
</dbReference>
<dbReference type="Gene3D" id="1.10.10.10">
    <property type="entry name" value="Winged helix-like DNA-binding domain superfamily/Winged helix DNA-binding domain"/>
    <property type="match status" value="1"/>
</dbReference>
<dbReference type="HAMAP" id="MF_03010">
    <property type="entry name" value="eIF3k"/>
    <property type="match status" value="1"/>
</dbReference>
<dbReference type="InterPro" id="IPR016024">
    <property type="entry name" value="ARM-type_fold"/>
</dbReference>
<dbReference type="InterPro" id="IPR033464">
    <property type="entry name" value="CSN8_PSD8_EIF3K"/>
</dbReference>
<dbReference type="InterPro" id="IPR009374">
    <property type="entry name" value="eIF3k"/>
</dbReference>
<dbReference type="InterPro" id="IPR000717">
    <property type="entry name" value="PCI_dom"/>
</dbReference>
<dbReference type="InterPro" id="IPR016020">
    <property type="entry name" value="Transl_init_fac_sub12_N_euk"/>
</dbReference>
<dbReference type="InterPro" id="IPR036388">
    <property type="entry name" value="WH-like_DNA-bd_sf"/>
</dbReference>
<dbReference type="InterPro" id="IPR036390">
    <property type="entry name" value="WH_DNA-bd_sf"/>
</dbReference>
<dbReference type="PANTHER" id="PTHR13022">
    <property type="entry name" value="EUKARYOTIC TRANSLATION INITIATION FACTOR 3 SUBUNIT 11"/>
    <property type="match status" value="1"/>
</dbReference>
<dbReference type="PANTHER" id="PTHR13022:SF0">
    <property type="entry name" value="EUKARYOTIC TRANSLATION INITIATION FACTOR 3 SUBUNIT K"/>
    <property type="match status" value="1"/>
</dbReference>
<dbReference type="Pfam" id="PF10075">
    <property type="entry name" value="CSN8_PSD8_EIF3K"/>
    <property type="match status" value="1"/>
</dbReference>
<dbReference type="SUPFAM" id="SSF48371">
    <property type="entry name" value="ARM repeat"/>
    <property type="match status" value="1"/>
</dbReference>
<dbReference type="SUPFAM" id="SSF46785">
    <property type="entry name" value="Winged helix' DNA-binding domain"/>
    <property type="match status" value="1"/>
</dbReference>
<dbReference type="PROSITE" id="PS50250">
    <property type="entry name" value="PCI"/>
    <property type="match status" value="1"/>
</dbReference>
<sequence length="249" mass="27958">MGVAFDKCDTRPAHIDAILNGLDRYNPETTTVFQDYVVQQCEERTFDCYANLALLKLYQFNPHLLQPETVTNILTKALTVFPSPAFSLCLALLPAHTQPFPTADTDASQSSDFVESIQKLARLSTLLESAQYAQFWSTLNSDDLYADLVADVAGFEELVRIRIAIEVGKAFREINAEVLEQWLDLRSREALEKFVTEVCSWEVDKAGPNGTVVKVPTNKENEARSEVKSERVGVEMFGRVIRRGFEQAA</sequence>
<keyword id="KW-0963">Cytoplasm</keyword>
<keyword id="KW-0396">Initiation factor</keyword>
<keyword id="KW-0648">Protein biosynthesis</keyword>
<keyword id="KW-1185">Reference proteome</keyword>
<accession>A1D7C4</accession>
<comment type="function">
    <text evidence="1">Component of the eukaryotic translation initiation factor 3 (eIF-3) complex, which is involved in protein synthesis of a specialized repertoire of mRNAs and, together with other initiation factors, stimulates binding of mRNA and methionyl-tRNAi to the 40S ribosome. The eIF-3 complex specifically targets and initiates translation of a subset of mRNAs involved in cell proliferation.</text>
</comment>
<comment type="subunit">
    <text evidence="1">Component of the eukaryotic translation initiation factor 3 (eIF-3) complex.</text>
</comment>
<comment type="subcellular location">
    <subcellularLocation>
        <location evidence="1">Cytoplasm</location>
    </subcellularLocation>
</comment>
<comment type="similarity">
    <text evidence="1">Belongs to the eIF-3 subunit K family.</text>
</comment>
<evidence type="ECO:0000255" key="1">
    <source>
        <dbReference type="HAMAP-Rule" id="MF_03010"/>
    </source>
</evidence>
<evidence type="ECO:0000255" key="2">
    <source>
        <dbReference type="PROSITE-ProRule" id="PRU01185"/>
    </source>
</evidence>
<name>EIF3K_NEOFI</name>
<organism>
    <name type="scientific">Neosartorya fischeri (strain ATCC 1020 / DSM 3700 / CBS 544.65 / FGSC A1164 / JCM 1740 / NRRL 181 / WB 181)</name>
    <name type="common">Aspergillus fischerianus</name>
    <dbReference type="NCBI Taxonomy" id="331117"/>
    <lineage>
        <taxon>Eukaryota</taxon>
        <taxon>Fungi</taxon>
        <taxon>Dikarya</taxon>
        <taxon>Ascomycota</taxon>
        <taxon>Pezizomycotina</taxon>
        <taxon>Eurotiomycetes</taxon>
        <taxon>Eurotiomycetidae</taxon>
        <taxon>Eurotiales</taxon>
        <taxon>Aspergillaceae</taxon>
        <taxon>Aspergillus</taxon>
        <taxon>Aspergillus subgen. Fumigati</taxon>
    </lineage>
</organism>
<protein>
    <recommendedName>
        <fullName evidence="1">Eukaryotic translation initiation factor 3 subunit K</fullName>
        <shortName evidence="1">eIF3k</shortName>
    </recommendedName>
    <alternativeName>
        <fullName evidence="1">eIF-3 p25</fullName>
    </alternativeName>
</protein>
<feature type="chain" id="PRO_0000365061" description="Eukaryotic translation initiation factor 3 subunit K">
    <location>
        <begin position="1"/>
        <end position="249"/>
    </location>
</feature>
<feature type="domain" description="PCI" evidence="2">
    <location>
        <begin position="46"/>
        <end position="222"/>
    </location>
</feature>
<proteinExistence type="inferred from homology"/>